<gene>
    <name type="primary">maiA</name>
    <name type="ordered locus">R02937</name>
    <name type="ORF">SMc03206</name>
</gene>
<organism>
    <name type="scientific">Rhizobium meliloti (strain 1021)</name>
    <name type="common">Ensifer meliloti</name>
    <name type="synonym">Sinorhizobium meliloti</name>
    <dbReference type="NCBI Taxonomy" id="266834"/>
    <lineage>
        <taxon>Bacteria</taxon>
        <taxon>Pseudomonadati</taxon>
        <taxon>Pseudomonadota</taxon>
        <taxon>Alphaproteobacteria</taxon>
        <taxon>Hyphomicrobiales</taxon>
        <taxon>Rhizobiaceae</taxon>
        <taxon>Sinorhizobium/Ensifer group</taxon>
        <taxon>Sinorhizobium</taxon>
    </lineage>
</organism>
<sequence>MANETVLYDYWRSSASYRVRIALNLCGEAYRSVPVDLLAKAHRAPEHLARNPQGLVPVLDIDGERLTQSLAIIEYLAETRDGTGLLPAHPIDRQRVRALSYAVAMDIHPVCNLGVVARVMAGAGDGEAARREWMQKFIGEGLAAFERMLDHPATGAFCHGDRPTMADLCLVPQVYNARRWDVDLAACPLLVAIDRRCAGIDAFQRAHPDRAKP</sequence>
<evidence type="ECO:0000305" key="1"/>
<reference key="1">
    <citation type="journal article" date="1999" name="Microbiology">
        <title>Identification of a novel nutrient-deprivation-induced Sinorhizobium meliloti gene (hmgA) involved in the degradation of tyrosine.</title>
        <authorList>
            <person name="Milcamps A."/>
            <person name="de Bruijn F.J."/>
        </authorList>
    </citation>
    <scope>NUCLEOTIDE SEQUENCE [GENOMIC DNA]</scope>
    <source>
        <strain>1021</strain>
    </source>
</reference>
<reference key="2">
    <citation type="journal article" date="2001" name="Proc. Natl. Acad. Sci. U.S.A.">
        <title>Analysis of the chromosome sequence of the legume symbiont Sinorhizobium meliloti strain 1021.</title>
        <authorList>
            <person name="Capela D."/>
            <person name="Barloy-Hubler F."/>
            <person name="Gouzy J."/>
            <person name="Bothe G."/>
            <person name="Ampe F."/>
            <person name="Batut J."/>
            <person name="Boistard P."/>
            <person name="Becker A."/>
            <person name="Boutry M."/>
            <person name="Cadieu E."/>
            <person name="Dreano S."/>
            <person name="Gloux S."/>
            <person name="Godrie T."/>
            <person name="Goffeau A."/>
            <person name="Kahn D."/>
            <person name="Kiss E."/>
            <person name="Lelaure V."/>
            <person name="Masuy D."/>
            <person name="Pohl T."/>
            <person name="Portetelle D."/>
            <person name="Puehler A."/>
            <person name="Purnelle B."/>
            <person name="Ramsperger U."/>
            <person name="Renard C."/>
            <person name="Thebault P."/>
            <person name="Vandenbol M."/>
            <person name="Weidner S."/>
            <person name="Galibert F."/>
        </authorList>
    </citation>
    <scope>NUCLEOTIDE SEQUENCE [LARGE SCALE GENOMIC DNA]</scope>
    <source>
        <strain>1021</strain>
    </source>
</reference>
<reference key="3">
    <citation type="journal article" date="2001" name="Science">
        <title>The composite genome of the legume symbiont Sinorhizobium meliloti.</title>
        <authorList>
            <person name="Galibert F."/>
            <person name="Finan T.M."/>
            <person name="Long S.R."/>
            <person name="Puehler A."/>
            <person name="Abola P."/>
            <person name="Ampe F."/>
            <person name="Barloy-Hubler F."/>
            <person name="Barnett M.J."/>
            <person name="Becker A."/>
            <person name="Boistard P."/>
            <person name="Bothe G."/>
            <person name="Boutry M."/>
            <person name="Bowser L."/>
            <person name="Buhrmester J."/>
            <person name="Cadieu E."/>
            <person name="Capela D."/>
            <person name="Chain P."/>
            <person name="Cowie A."/>
            <person name="Davis R.W."/>
            <person name="Dreano S."/>
            <person name="Federspiel N.A."/>
            <person name="Fisher R.F."/>
            <person name="Gloux S."/>
            <person name="Godrie T."/>
            <person name="Goffeau A."/>
            <person name="Golding B."/>
            <person name="Gouzy J."/>
            <person name="Gurjal M."/>
            <person name="Hernandez-Lucas I."/>
            <person name="Hong A."/>
            <person name="Huizar L."/>
            <person name="Hyman R.W."/>
            <person name="Jones T."/>
            <person name="Kahn D."/>
            <person name="Kahn M.L."/>
            <person name="Kalman S."/>
            <person name="Keating D.H."/>
            <person name="Kiss E."/>
            <person name="Komp C."/>
            <person name="Lelaure V."/>
            <person name="Masuy D."/>
            <person name="Palm C."/>
            <person name="Peck M.C."/>
            <person name="Pohl T.M."/>
            <person name="Portetelle D."/>
            <person name="Purnelle B."/>
            <person name="Ramsperger U."/>
            <person name="Surzycki R."/>
            <person name="Thebault P."/>
            <person name="Vandenbol M."/>
            <person name="Vorhoelter F.J."/>
            <person name="Weidner S."/>
            <person name="Wells D.H."/>
            <person name="Wong K."/>
            <person name="Yeh K.-C."/>
            <person name="Batut J."/>
        </authorList>
    </citation>
    <scope>NUCLEOTIDE SEQUENCE [LARGE SCALE GENOMIC DNA]</scope>
    <source>
        <strain>1021</strain>
    </source>
</reference>
<protein>
    <recommendedName>
        <fullName>Maleylacetoacetate isomerase</fullName>
        <shortName>MAAI</shortName>
        <ecNumber>5.2.1.2</ecNumber>
    </recommendedName>
</protein>
<comment type="catalytic activity">
    <reaction>
        <text>4-maleylacetoacetate = 4-fumarylacetoacetate</text>
        <dbReference type="Rhea" id="RHEA:14817"/>
        <dbReference type="ChEBI" id="CHEBI:17105"/>
        <dbReference type="ChEBI" id="CHEBI:18034"/>
        <dbReference type="EC" id="5.2.1.2"/>
    </reaction>
</comment>
<comment type="pathway">
    <text>Amino-acid degradation; L-phenylalanine degradation; acetoacetate and fumarate from L-phenylalanine: step 5/6.</text>
</comment>
<comment type="similarity">
    <text evidence="1">Belongs to the GST superfamily. Zeta family.</text>
</comment>
<comment type="sequence caution" evidence="1">
    <conflict type="erroneous initiation">
        <sequence resource="EMBL-CDS" id="CAC47516"/>
    </conflict>
</comment>
<name>MAAI_RHIME</name>
<feature type="chain" id="PRO_0000186036" description="Maleylacetoacetate isomerase">
    <location>
        <begin position="1"/>
        <end position="213"/>
    </location>
</feature>
<feature type="domain" description="GST N-terminal">
    <location>
        <begin position="3"/>
        <end position="84"/>
    </location>
</feature>
<feature type="domain" description="GST C-terminal">
    <location>
        <begin position="89"/>
        <end position="213"/>
    </location>
</feature>
<dbReference type="EC" id="5.2.1.2"/>
<dbReference type="EMBL" id="AF109131">
    <property type="protein sequence ID" value="AAD29876.1"/>
    <property type="molecule type" value="Genomic_DNA"/>
</dbReference>
<dbReference type="EMBL" id="AL591688">
    <property type="protein sequence ID" value="CAC47516.1"/>
    <property type="status" value="ALT_INIT"/>
    <property type="molecule type" value="Genomic_DNA"/>
</dbReference>
<dbReference type="RefSeq" id="NP_387043.1">
    <property type="nucleotide sequence ID" value="NC_003047.1"/>
</dbReference>
<dbReference type="SMR" id="Q9X4F7"/>
<dbReference type="EnsemblBacteria" id="CAC47516">
    <property type="protein sequence ID" value="CAC47516"/>
    <property type="gene ID" value="SMc03206"/>
</dbReference>
<dbReference type="KEGG" id="sme:SMc03206"/>
<dbReference type="PATRIC" id="fig|266834.11.peg.4459"/>
<dbReference type="eggNOG" id="COG0625">
    <property type="taxonomic scope" value="Bacteria"/>
</dbReference>
<dbReference type="HOGENOM" id="CLU_011226_20_1_5"/>
<dbReference type="OrthoDB" id="509852at2"/>
<dbReference type="UniPathway" id="UPA00139">
    <property type="reaction ID" value="UER00340"/>
</dbReference>
<dbReference type="Proteomes" id="UP000001976">
    <property type="component" value="Chromosome"/>
</dbReference>
<dbReference type="GO" id="GO:0005737">
    <property type="term" value="C:cytoplasm"/>
    <property type="evidence" value="ECO:0007669"/>
    <property type="project" value="InterPro"/>
</dbReference>
<dbReference type="GO" id="GO:0004364">
    <property type="term" value="F:glutathione transferase activity"/>
    <property type="evidence" value="ECO:0007669"/>
    <property type="project" value="TreeGrafter"/>
</dbReference>
<dbReference type="GO" id="GO:0016034">
    <property type="term" value="F:maleylacetoacetate isomerase activity"/>
    <property type="evidence" value="ECO:0007669"/>
    <property type="project" value="UniProtKB-EC"/>
</dbReference>
<dbReference type="GO" id="GO:0006749">
    <property type="term" value="P:glutathione metabolic process"/>
    <property type="evidence" value="ECO:0007669"/>
    <property type="project" value="TreeGrafter"/>
</dbReference>
<dbReference type="GO" id="GO:0006559">
    <property type="term" value="P:L-phenylalanine catabolic process"/>
    <property type="evidence" value="ECO:0007669"/>
    <property type="project" value="UniProtKB-UniPathway"/>
</dbReference>
<dbReference type="GO" id="GO:0006572">
    <property type="term" value="P:tyrosine catabolic process"/>
    <property type="evidence" value="ECO:0007669"/>
    <property type="project" value="UniProtKB-KW"/>
</dbReference>
<dbReference type="CDD" id="cd03191">
    <property type="entry name" value="GST_C_Zeta"/>
    <property type="match status" value="1"/>
</dbReference>
<dbReference type="CDD" id="cd03042">
    <property type="entry name" value="GST_N_Zeta"/>
    <property type="match status" value="1"/>
</dbReference>
<dbReference type="Gene3D" id="1.20.1050.10">
    <property type="match status" value="1"/>
</dbReference>
<dbReference type="Gene3D" id="3.40.30.10">
    <property type="entry name" value="Glutaredoxin"/>
    <property type="match status" value="1"/>
</dbReference>
<dbReference type="InterPro" id="IPR010987">
    <property type="entry name" value="Glutathione-S-Trfase_C-like"/>
</dbReference>
<dbReference type="InterPro" id="IPR036282">
    <property type="entry name" value="Glutathione-S-Trfase_C_sf"/>
</dbReference>
<dbReference type="InterPro" id="IPR040079">
    <property type="entry name" value="Glutathione_S-Trfase"/>
</dbReference>
<dbReference type="InterPro" id="IPR004045">
    <property type="entry name" value="Glutathione_S-Trfase_N"/>
</dbReference>
<dbReference type="InterPro" id="IPR005955">
    <property type="entry name" value="GST_Zeta"/>
</dbReference>
<dbReference type="InterPro" id="IPR034330">
    <property type="entry name" value="GST_Zeta_C"/>
</dbReference>
<dbReference type="InterPro" id="IPR034333">
    <property type="entry name" value="GST_Zeta_N"/>
</dbReference>
<dbReference type="InterPro" id="IPR036249">
    <property type="entry name" value="Thioredoxin-like_sf"/>
</dbReference>
<dbReference type="NCBIfam" id="TIGR01262">
    <property type="entry name" value="maiA"/>
    <property type="match status" value="1"/>
</dbReference>
<dbReference type="PANTHER" id="PTHR42673">
    <property type="entry name" value="MALEYLACETOACETATE ISOMERASE"/>
    <property type="match status" value="1"/>
</dbReference>
<dbReference type="PANTHER" id="PTHR42673:SF4">
    <property type="entry name" value="MALEYLACETOACETATE ISOMERASE"/>
    <property type="match status" value="1"/>
</dbReference>
<dbReference type="Pfam" id="PF13410">
    <property type="entry name" value="GST_C_2"/>
    <property type="match status" value="1"/>
</dbReference>
<dbReference type="Pfam" id="PF02798">
    <property type="entry name" value="GST_N"/>
    <property type="match status" value="1"/>
</dbReference>
<dbReference type="SFLD" id="SFLDS00019">
    <property type="entry name" value="Glutathione_Transferase_(cytos"/>
    <property type="match status" value="1"/>
</dbReference>
<dbReference type="SFLD" id="SFLDG00358">
    <property type="entry name" value="Main_(cytGST)"/>
    <property type="match status" value="1"/>
</dbReference>
<dbReference type="SUPFAM" id="SSF47616">
    <property type="entry name" value="GST C-terminal domain-like"/>
    <property type="match status" value="1"/>
</dbReference>
<dbReference type="SUPFAM" id="SSF52833">
    <property type="entry name" value="Thioredoxin-like"/>
    <property type="match status" value="1"/>
</dbReference>
<dbReference type="PROSITE" id="PS50405">
    <property type="entry name" value="GST_CTER"/>
    <property type="match status" value="1"/>
</dbReference>
<dbReference type="PROSITE" id="PS50404">
    <property type="entry name" value="GST_NTER"/>
    <property type="match status" value="1"/>
</dbReference>
<proteinExistence type="inferred from homology"/>
<accession>Q9X4F7</accession>
<keyword id="KW-0413">Isomerase</keyword>
<keyword id="KW-0585">Phenylalanine catabolism</keyword>
<keyword id="KW-1185">Reference proteome</keyword>
<keyword id="KW-0828">Tyrosine catabolism</keyword>